<sequence>MIIVTDSERKIRLPFSRGILTRSITLAGIDVGIAYAIATEVQKELEWKGKKSVTTEEIRELTYQKLLEKGLREEAKRYLFWRELRRRKVRLTVLLGGATGVGKSTIATELAFRLGIRSIIGTDTIREVMRKIIAKELLPDIHVSSFLAERVVKAPKNSDPLIYGFETQVKHVSVGIKAVLERARREGLNTLIEGIHVVPGFVEPREDEFMYVIAVPKKDYLIAHFYERARYSQRDAEKYVKHVDRIMRIQDYLVERAREHGIPVIENVELESTVSTILADMMKKLEEMGV</sequence>
<comment type="function">
    <text evidence="1">Catalyzes the phosphorylation of 2-phosphoglycerate to 2,3-diphosphoglycerate. Involved in the biosynthesis of cyclic 2,3-bisphosphoglycerate, a thermoprotectant.</text>
</comment>
<comment type="catalytic activity">
    <reaction evidence="1">
        <text>(2R)-2-phosphoglycerate + ATP = (2R)-2,3-bisphosphoglycerate + ADP + H(+)</text>
        <dbReference type="Rhea" id="RHEA:42408"/>
        <dbReference type="ChEBI" id="CHEBI:15378"/>
        <dbReference type="ChEBI" id="CHEBI:30616"/>
        <dbReference type="ChEBI" id="CHEBI:58248"/>
        <dbReference type="ChEBI" id="CHEBI:58289"/>
        <dbReference type="ChEBI" id="CHEBI:456216"/>
        <dbReference type="EC" id="2.7.2.16"/>
    </reaction>
</comment>
<comment type="cofactor">
    <cofactor evidence="1">
        <name>a divalent metal cation</name>
        <dbReference type="ChEBI" id="CHEBI:60240"/>
    </cofactor>
</comment>
<comment type="pathway">
    <text evidence="1">Thermoadapter biosynthesis; cyclic 2,3-diphosphoglycerate biosynthesis; cyclic 2,3-diphosphoglycerate from 2-phospho-D-glycerate: step 1/2.</text>
</comment>
<comment type="similarity">
    <text evidence="1 2">Belongs to the 2-phosphoglycerate kinase family.</text>
</comment>
<dbReference type="EC" id="2.7.2.16" evidence="1"/>
<dbReference type="EMBL" id="AP006878">
    <property type="protein sequence ID" value="BAD85227.1"/>
    <property type="molecule type" value="Genomic_DNA"/>
</dbReference>
<dbReference type="RefSeq" id="WP_011249989.1">
    <property type="nucleotide sequence ID" value="NC_006624.1"/>
</dbReference>
<dbReference type="STRING" id="69014.TK1038"/>
<dbReference type="EnsemblBacteria" id="BAD85227">
    <property type="protein sequence ID" value="BAD85227"/>
    <property type="gene ID" value="TK1038"/>
</dbReference>
<dbReference type="GeneID" id="78447551"/>
<dbReference type="KEGG" id="tko:TK1038"/>
<dbReference type="PATRIC" id="fig|69014.16.peg.1015"/>
<dbReference type="eggNOG" id="arCOG01967">
    <property type="taxonomic scope" value="Archaea"/>
</dbReference>
<dbReference type="HOGENOM" id="CLU_848909_0_0_2"/>
<dbReference type="InParanoid" id="Q5JDW9"/>
<dbReference type="OrthoDB" id="358692at2157"/>
<dbReference type="PhylomeDB" id="Q5JDW9"/>
<dbReference type="UniPathway" id="UPA00551">
    <property type="reaction ID" value="UER00609"/>
</dbReference>
<dbReference type="Proteomes" id="UP000000536">
    <property type="component" value="Chromosome"/>
</dbReference>
<dbReference type="GO" id="GO:0005524">
    <property type="term" value="F:ATP binding"/>
    <property type="evidence" value="ECO:0007669"/>
    <property type="project" value="UniProtKB-KW"/>
</dbReference>
<dbReference type="GO" id="GO:0016301">
    <property type="term" value="F:kinase activity"/>
    <property type="evidence" value="ECO:0007669"/>
    <property type="project" value="UniProtKB-KW"/>
</dbReference>
<dbReference type="GO" id="GO:0016774">
    <property type="term" value="F:phosphotransferase activity, carboxyl group as acceptor"/>
    <property type="evidence" value="ECO:0007669"/>
    <property type="project" value="UniProtKB-UniRule"/>
</dbReference>
<dbReference type="Gene3D" id="3.40.50.300">
    <property type="entry name" value="P-loop containing nucleotide triphosphate hydrolases"/>
    <property type="match status" value="1"/>
</dbReference>
<dbReference type="HAMAP" id="MF_00769">
    <property type="entry name" value="2PGK"/>
    <property type="match status" value="1"/>
</dbReference>
<dbReference type="InterPro" id="IPR020872">
    <property type="entry name" value="2PKG"/>
</dbReference>
<dbReference type="InterPro" id="IPR005144">
    <property type="entry name" value="ATP-cone_dom"/>
</dbReference>
<dbReference type="InterPro" id="IPR027417">
    <property type="entry name" value="P-loop_NTPase"/>
</dbReference>
<dbReference type="NCBIfam" id="NF003259">
    <property type="entry name" value="PRK04220.1"/>
    <property type="match status" value="1"/>
</dbReference>
<dbReference type="PANTHER" id="PTHR33477">
    <property type="entry name" value="P-LOOP NTPASE DOMAIN-CONTAINING PROTEIN LPA1 HOMOLOG 1"/>
    <property type="match status" value="1"/>
</dbReference>
<dbReference type="PANTHER" id="PTHR33477:SF3">
    <property type="entry name" value="P-LOOP NTPASE DOMAIN-CONTAINING PROTEIN LPA1 HOMOLOG 1"/>
    <property type="match status" value="1"/>
</dbReference>
<dbReference type="Pfam" id="PF03477">
    <property type="entry name" value="ATP-cone"/>
    <property type="match status" value="1"/>
</dbReference>
<dbReference type="SUPFAM" id="SSF52540">
    <property type="entry name" value="P-loop containing nucleoside triphosphate hydrolases"/>
    <property type="match status" value="1"/>
</dbReference>
<dbReference type="PROSITE" id="PS51161">
    <property type="entry name" value="ATP_CONE"/>
    <property type="match status" value="1"/>
</dbReference>
<name>PGK2_THEKO</name>
<proteinExistence type="inferred from homology"/>
<organism>
    <name type="scientific">Thermococcus kodakarensis (strain ATCC BAA-918 / JCM 12380 / KOD1)</name>
    <name type="common">Pyrococcus kodakaraensis (strain KOD1)</name>
    <dbReference type="NCBI Taxonomy" id="69014"/>
    <lineage>
        <taxon>Archaea</taxon>
        <taxon>Methanobacteriati</taxon>
        <taxon>Methanobacteriota</taxon>
        <taxon>Thermococci</taxon>
        <taxon>Thermococcales</taxon>
        <taxon>Thermococcaceae</taxon>
        <taxon>Thermococcus</taxon>
    </lineage>
</organism>
<protein>
    <recommendedName>
        <fullName evidence="1">2-phosphoglycerate kinase</fullName>
        <shortName evidence="1">2PGK</shortName>
        <ecNumber evidence="1">2.7.2.16</ecNumber>
    </recommendedName>
</protein>
<reference key="1">
    <citation type="journal article" date="2005" name="Genome Res.">
        <title>Complete genome sequence of the hyperthermophilic archaeon Thermococcus kodakaraensis KOD1 and comparison with Pyrococcus genomes.</title>
        <authorList>
            <person name="Fukui T."/>
            <person name="Atomi H."/>
            <person name="Kanai T."/>
            <person name="Matsumi R."/>
            <person name="Fujiwara S."/>
            <person name="Imanaka T."/>
        </authorList>
    </citation>
    <scope>NUCLEOTIDE SEQUENCE [LARGE SCALE GENOMIC DNA]</scope>
    <source>
        <strain>ATCC BAA-918 / JCM 12380 / KOD1</strain>
    </source>
</reference>
<feature type="chain" id="PRO_0000156156" description="2-phosphoglycerate kinase">
    <location>
        <begin position="1"/>
        <end position="290"/>
    </location>
</feature>
<feature type="domain" description="ATP-cone" evidence="1">
    <location>
        <begin position="1"/>
        <end position="89"/>
    </location>
</feature>
<gene>
    <name evidence="1" type="primary">pgk2</name>
    <name type="ordered locus">TK1038</name>
</gene>
<evidence type="ECO:0000255" key="1">
    <source>
        <dbReference type="HAMAP-Rule" id="MF_00769"/>
    </source>
</evidence>
<evidence type="ECO:0000305" key="2"/>
<accession>Q5JDW9</accession>
<keyword id="KW-0067">ATP-binding</keyword>
<keyword id="KW-0418">Kinase</keyword>
<keyword id="KW-0547">Nucleotide-binding</keyword>
<keyword id="KW-1185">Reference proteome</keyword>
<keyword id="KW-0808">Transferase</keyword>